<dbReference type="EMBL" id="AP008229">
    <property type="protein sequence ID" value="BAE70141.1"/>
    <property type="molecule type" value="Genomic_DNA"/>
</dbReference>
<dbReference type="RefSeq" id="WP_011260028.1">
    <property type="nucleotide sequence ID" value="NC_007705.1"/>
</dbReference>
<dbReference type="SMR" id="Q2NZY6"/>
<dbReference type="GeneID" id="77338712"/>
<dbReference type="KEGG" id="xom:XOO3386"/>
<dbReference type="HOGENOM" id="CLU_041575_5_2_6"/>
<dbReference type="GO" id="GO:1990904">
    <property type="term" value="C:ribonucleoprotein complex"/>
    <property type="evidence" value="ECO:0007669"/>
    <property type="project" value="UniProtKB-KW"/>
</dbReference>
<dbReference type="GO" id="GO:0005840">
    <property type="term" value="C:ribosome"/>
    <property type="evidence" value="ECO:0007669"/>
    <property type="project" value="UniProtKB-KW"/>
</dbReference>
<dbReference type="GO" id="GO:0019843">
    <property type="term" value="F:rRNA binding"/>
    <property type="evidence" value="ECO:0007669"/>
    <property type="project" value="UniProtKB-UniRule"/>
</dbReference>
<dbReference type="GO" id="GO:0003735">
    <property type="term" value="F:structural constituent of ribosome"/>
    <property type="evidence" value="ECO:0007669"/>
    <property type="project" value="InterPro"/>
</dbReference>
<dbReference type="GO" id="GO:0006412">
    <property type="term" value="P:translation"/>
    <property type="evidence" value="ECO:0007669"/>
    <property type="project" value="UniProtKB-UniRule"/>
</dbReference>
<dbReference type="FunFam" id="3.40.1370.10:FF:000007">
    <property type="entry name" value="50S ribosomal protein L4"/>
    <property type="match status" value="1"/>
</dbReference>
<dbReference type="Gene3D" id="3.40.1370.10">
    <property type="match status" value="1"/>
</dbReference>
<dbReference type="HAMAP" id="MF_01328_B">
    <property type="entry name" value="Ribosomal_uL4_B"/>
    <property type="match status" value="1"/>
</dbReference>
<dbReference type="InterPro" id="IPR002136">
    <property type="entry name" value="Ribosomal_uL4"/>
</dbReference>
<dbReference type="InterPro" id="IPR013005">
    <property type="entry name" value="Ribosomal_uL4-like"/>
</dbReference>
<dbReference type="InterPro" id="IPR023574">
    <property type="entry name" value="Ribosomal_uL4_dom_sf"/>
</dbReference>
<dbReference type="NCBIfam" id="TIGR03953">
    <property type="entry name" value="rplD_bact"/>
    <property type="match status" value="1"/>
</dbReference>
<dbReference type="PANTHER" id="PTHR10746">
    <property type="entry name" value="50S RIBOSOMAL PROTEIN L4"/>
    <property type="match status" value="1"/>
</dbReference>
<dbReference type="PANTHER" id="PTHR10746:SF6">
    <property type="entry name" value="LARGE RIBOSOMAL SUBUNIT PROTEIN UL4M"/>
    <property type="match status" value="1"/>
</dbReference>
<dbReference type="Pfam" id="PF00573">
    <property type="entry name" value="Ribosomal_L4"/>
    <property type="match status" value="1"/>
</dbReference>
<dbReference type="SUPFAM" id="SSF52166">
    <property type="entry name" value="Ribosomal protein L4"/>
    <property type="match status" value="1"/>
</dbReference>
<name>RL4_XANOM</name>
<comment type="function">
    <text evidence="1">One of the primary rRNA binding proteins, this protein initially binds near the 5'-end of the 23S rRNA. It is important during the early stages of 50S assembly. It makes multiple contacts with different domains of the 23S rRNA in the assembled 50S subunit and ribosome.</text>
</comment>
<comment type="function">
    <text evidence="1">Forms part of the polypeptide exit tunnel.</text>
</comment>
<comment type="subunit">
    <text evidence="1">Part of the 50S ribosomal subunit.</text>
</comment>
<comment type="similarity">
    <text evidence="1">Belongs to the universal ribosomal protein uL4 family.</text>
</comment>
<feature type="chain" id="PRO_0000242464" description="Large ribosomal subunit protein uL4">
    <location>
        <begin position="1"/>
        <end position="201"/>
    </location>
</feature>
<feature type="region of interest" description="Disordered" evidence="2">
    <location>
        <begin position="44"/>
        <end position="68"/>
    </location>
</feature>
<protein>
    <recommendedName>
        <fullName evidence="1">Large ribosomal subunit protein uL4</fullName>
    </recommendedName>
    <alternativeName>
        <fullName evidence="3">50S ribosomal protein L4</fullName>
    </alternativeName>
</protein>
<organism>
    <name type="scientific">Xanthomonas oryzae pv. oryzae (strain MAFF 311018)</name>
    <dbReference type="NCBI Taxonomy" id="342109"/>
    <lineage>
        <taxon>Bacteria</taxon>
        <taxon>Pseudomonadati</taxon>
        <taxon>Pseudomonadota</taxon>
        <taxon>Gammaproteobacteria</taxon>
        <taxon>Lysobacterales</taxon>
        <taxon>Lysobacteraceae</taxon>
        <taxon>Xanthomonas</taxon>
    </lineage>
</organism>
<sequence>MELVITGSNNKVSVSEAVFGREFSEDLVHQVVVAYRNAGRAGTKAQKTRSEVAGTTKKSKKQKGGGARHGALTAPIFVGGGVTFAAKPRSFEQKVNRKMYRAAICAIFSELNRQGRLMIVDAFDLEATKTKDLIEKLKGLDVGKRPLIVTEEASEHLYLSARNLPYVQVRDVQGLDPVALVGADTVVITADAVKKVEEWLA</sequence>
<gene>
    <name evidence="1" type="primary">rplD</name>
    <name type="ordered locus">XOO3386</name>
</gene>
<reference key="1">
    <citation type="journal article" date="2005" name="Jpn. Agric. Res. Q.">
        <title>Genome sequence of Xanthomonas oryzae pv. oryzae suggests contribution of large numbers of effector genes and insertion sequences to its race diversity.</title>
        <authorList>
            <person name="Ochiai H."/>
            <person name="Inoue Y."/>
            <person name="Takeya M."/>
            <person name="Sasaki A."/>
            <person name="Kaku H."/>
        </authorList>
    </citation>
    <scope>NUCLEOTIDE SEQUENCE [LARGE SCALE GENOMIC DNA]</scope>
    <source>
        <strain>MAFF 311018</strain>
    </source>
</reference>
<accession>Q2NZY6</accession>
<keyword id="KW-0687">Ribonucleoprotein</keyword>
<keyword id="KW-0689">Ribosomal protein</keyword>
<keyword id="KW-0694">RNA-binding</keyword>
<keyword id="KW-0699">rRNA-binding</keyword>
<evidence type="ECO:0000255" key="1">
    <source>
        <dbReference type="HAMAP-Rule" id="MF_01328"/>
    </source>
</evidence>
<evidence type="ECO:0000256" key="2">
    <source>
        <dbReference type="SAM" id="MobiDB-lite"/>
    </source>
</evidence>
<evidence type="ECO:0000305" key="3"/>
<proteinExistence type="inferred from homology"/>